<comment type="function">
    <text evidence="1">NDH-1 shuttles electrons from NADH, via FMN and iron-sulfur (Fe-S) centers, to quinones in the respiratory chain. Couples the redox reaction to proton translocation (for every two electrons transferred, four hydrogen ions are translocated across the cytoplasmic membrane), and thus conserves the redox energy in a proton gradient (By similarity).</text>
</comment>
<comment type="catalytic activity">
    <reaction evidence="2">
        <text>a quinone + NADH + 5 H(+)(in) = a quinol + NAD(+) + 4 H(+)(out)</text>
        <dbReference type="Rhea" id="RHEA:57888"/>
        <dbReference type="ChEBI" id="CHEBI:15378"/>
        <dbReference type="ChEBI" id="CHEBI:24646"/>
        <dbReference type="ChEBI" id="CHEBI:57540"/>
        <dbReference type="ChEBI" id="CHEBI:57945"/>
        <dbReference type="ChEBI" id="CHEBI:132124"/>
    </reaction>
</comment>
<comment type="cofactor">
    <cofactor evidence="2">
        <name>[4Fe-4S] cluster</name>
        <dbReference type="ChEBI" id="CHEBI:49883"/>
    </cofactor>
    <text evidence="2">Binds 1 [4Fe-4S] cluster.</text>
</comment>
<comment type="subunit">
    <text evidence="2">NDH-1 is composed of 14 different subunits. Subunits NuoB, C, D, E, F, and G constitute the peripheral sector of the complex.</text>
</comment>
<comment type="subcellular location">
    <subcellularLocation>
        <location evidence="2">Cell inner membrane</location>
        <topology evidence="2">Peripheral membrane protein</topology>
        <orientation evidence="2">Cytoplasmic side</orientation>
    </subcellularLocation>
</comment>
<comment type="similarity">
    <text evidence="2">Belongs to the complex I 20 kDa subunit family.</text>
</comment>
<feature type="chain" id="PRO_0000358397" description="NADH-quinone oxidoreductase subunit B">
    <location>
        <begin position="1"/>
        <end position="161"/>
    </location>
</feature>
<feature type="binding site" evidence="2">
    <location>
        <position position="36"/>
    </location>
    <ligand>
        <name>[4Fe-4S] cluster</name>
        <dbReference type="ChEBI" id="CHEBI:49883"/>
    </ligand>
</feature>
<feature type="binding site" evidence="2">
    <location>
        <position position="37"/>
    </location>
    <ligand>
        <name>[4Fe-4S] cluster</name>
        <dbReference type="ChEBI" id="CHEBI:49883"/>
    </ligand>
</feature>
<feature type="binding site" evidence="2">
    <location>
        <position position="102"/>
    </location>
    <ligand>
        <name>[4Fe-4S] cluster</name>
        <dbReference type="ChEBI" id="CHEBI:49883"/>
    </ligand>
</feature>
<feature type="binding site" evidence="2">
    <location>
        <position position="132"/>
    </location>
    <ligand>
        <name>[4Fe-4S] cluster</name>
        <dbReference type="ChEBI" id="CHEBI:49883"/>
    </ligand>
</feature>
<name>NUOB_COXBR</name>
<protein>
    <recommendedName>
        <fullName evidence="2">NADH-quinone oxidoreductase subunit B</fullName>
        <ecNumber evidence="2">7.1.1.-</ecNumber>
    </recommendedName>
    <alternativeName>
        <fullName evidence="2">NADH dehydrogenase I subunit B</fullName>
    </alternativeName>
    <alternativeName>
        <fullName evidence="2">NDH-1 subunit B</fullName>
    </alternativeName>
</protein>
<sequence length="161" mass="18160">MQQLLTKEGFLLTSLDDLMRWARSGSLWPMTFGLACCAVEMMQCASSRYDLDRFGAGLFRPSPRQSDVMIVAGTLCNKMAPALRKVYDQMAEPRWVISMGSCANGGGYYHYAYSVVRGCDRIVPVDVYVPGCPPTAEALFYGIMQLRNKIRYRNIFDRKDA</sequence>
<dbReference type="EC" id="7.1.1.-" evidence="2"/>
<dbReference type="EMBL" id="CP000890">
    <property type="protein sequence ID" value="ABX78004.1"/>
    <property type="molecule type" value="Genomic_DNA"/>
</dbReference>
<dbReference type="RefSeq" id="WP_005769074.1">
    <property type="nucleotide sequence ID" value="NC_010117.1"/>
</dbReference>
<dbReference type="SMR" id="A9N8X2"/>
<dbReference type="KEGG" id="cbs:COXBURSA331_A1617"/>
<dbReference type="HOGENOM" id="CLU_055737_7_3_6"/>
<dbReference type="GO" id="GO:0005886">
    <property type="term" value="C:plasma membrane"/>
    <property type="evidence" value="ECO:0007669"/>
    <property type="project" value="UniProtKB-SubCell"/>
</dbReference>
<dbReference type="GO" id="GO:0045271">
    <property type="term" value="C:respiratory chain complex I"/>
    <property type="evidence" value="ECO:0007669"/>
    <property type="project" value="TreeGrafter"/>
</dbReference>
<dbReference type="GO" id="GO:0051539">
    <property type="term" value="F:4 iron, 4 sulfur cluster binding"/>
    <property type="evidence" value="ECO:0007669"/>
    <property type="project" value="UniProtKB-KW"/>
</dbReference>
<dbReference type="GO" id="GO:0005506">
    <property type="term" value="F:iron ion binding"/>
    <property type="evidence" value="ECO:0007669"/>
    <property type="project" value="UniProtKB-UniRule"/>
</dbReference>
<dbReference type="GO" id="GO:0008137">
    <property type="term" value="F:NADH dehydrogenase (ubiquinone) activity"/>
    <property type="evidence" value="ECO:0007669"/>
    <property type="project" value="InterPro"/>
</dbReference>
<dbReference type="GO" id="GO:0050136">
    <property type="term" value="F:NADH:ubiquinone reductase (non-electrogenic) activity"/>
    <property type="evidence" value="ECO:0007669"/>
    <property type="project" value="UniProtKB-UniRule"/>
</dbReference>
<dbReference type="GO" id="GO:0048038">
    <property type="term" value="F:quinone binding"/>
    <property type="evidence" value="ECO:0007669"/>
    <property type="project" value="UniProtKB-KW"/>
</dbReference>
<dbReference type="GO" id="GO:0009060">
    <property type="term" value="P:aerobic respiration"/>
    <property type="evidence" value="ECO:0007669"/>
    <property type="project" value="TreeGrafter"/>
</dbReference>
<dbReference type="GO" id="GO:0015990">
    <property type="term" value="P:electron transport coupled proton transport"/>
    <property type="evidence" value="ECO:0007669"/>
    <property type="project" value="TreeGrafter"/>
</dbReference>
<dbReference type="FunFam" id="3.40.50.12280:FF:000001">
    <property type="entry name" value="NADH-quinone oxidoreductase subunit B 2"/>
    <property type="match status" value="1"/>
</dbReference>
<dbReference type="Gene3D" id="3.40.50.12280">
    <property type="match status" value="1"/>
</dbReference>
<dbReference type="HAMAP" id="MF_01356">
    <property type="entry name" value="NDH1_NuoB"/>
    <property type="match status" value="1"/>
</dbReference>
<dbReference type="InterPro" id="IPR006137">
    <property type="entry name" value="NADH_UbQ_OxRdtase-like_20kDa"/>
</dbReference>
<dbReference type="InterPro" id="IPR006138">
    <property type="entry name" value="NADH_UQ_OxRdtase_20Kd_su"/>
</dbReference>
<dbReference type="NCBIfam" id="TIGR01957">
    <property type="entry name" value="nuoB_fam"/>
    <property type="match status" value="1"/>
</dbReference>
<dbReference type="NCBIfam" id="NF005012">
    <property type="entry name" value="PRK06411.1"/>
    <property type="match status" value="1"/>
</dbReference>
<dbReference type="PANTHER" id="PTHR11995">
    <property type="entry name" value="NADH DEHYDROGENASE"/>
    <property type="match status" value="1"/>
</dbReference>
<dbReference type="PANTHER" id="PTHR11995:SF14">
    <property type="entry name" value="NADH DEHYDROGENASE [UBIQUINONE] IRON-SULFUR PROTEIN 7, MITOCHONDRIAL"/>
    <property type="match status" value="1"/>
</dbReference>
<dbReference type="Pfam" id="PF01058">
    <property type="entry name" value="Oxidored_q6"/>
    <property type="match status" value="1"/>
</dbReference>
<dbReference type="SUPFAM" id="SSF56770">
    <property type="entry name" value="HydA/Nqo6-like"/>
    <property type="match status" value="1"/>
</dbReference>
<dbReference type="PROSITE" id="PS01150">
    <property type="entry name" value="COMPLEX1_20K"/>
    <property type="match status" value="1"/>
</dbReference>
<reference key="1">
    <citation type="submission" date="2007-11" db="EMBL/GenBank/DDBJ databases">
        <title>Genome sequencing of phylogenetically and phenotypically diverse Coxiella burnetii isolates.</title>
        <authorList>
            <person name="Seshadri R."/>
            <person name="Samuel J.E."/>
        </authorList>
    </citation>
    <scope>NUCLEOTIDE SEQUENCE [LARGE SCALE GENOMIC DNA]</scope>
    <source>
        <strain>RSA 331 / Henzerling II</strain>
    </source>
</reference>
<keyword id="KW-0004">4Fe-4S</keyword>
<keyword id="KW-0997">Cell inner membrane</keyword>
<keyword id="KW-1003">Cell membrane</keyword>
<keyword id="KW-0408">Iron</keyword>
<keyword id="KW-0411">Iron-sulfur</keyword>
<keyword id="KW-0472">Membrane</keyword>
<keyword id="KW-0479">Metal-binding</keyword>
<keyword id="KW-0520">NAD</keyword>
<keyword id="KW-0874">Quinone</keyword>
<keyword id="KW-1278">Translocase</keyword>
<keyword id="KW-0813">Transport</keyword>
<keyword id="KW-0830">Ubiquinone</keyword>
<evidence type="ECO:0000250" key="1"/>
<evidence type="ECO:0000255" key="2">
    <source>
        <dbReference type="HAMAP-Rule" id="MF_01356"/>
    </source>
</evidence>
<organism>
    <name type="scientific">Coxiella burnetii (strain RSA 331 / Henzerling II)</name>
    <dbReference type="NCBI Taxonomy" id="360115"/>
    <lineage>
        <taxon>Bacteria</taxon>
        <taxon>Pseudomonadati</taxon>
        <taxon>Pseudomonadota</taxon>
        <taxon>Gammaproteobacteria</taxon>
        <taxon>Legionellales</taxon>
        <taxon>Coxiellaceae</taxon>
        <taxon>Coxiella</taxon>
    </lineage>
</organism>
<proteinExistence type="inferred from homology"/>
<gene>
    <name evidence="2" type="primary">nuoB</name>
    <name type="ordered locus">COXBURSA331_A1617</name>
</gene>
<accession>A9N8X2</accession>